<keyword id="KW-0963">Cytoplasm</keyword>
<keyword id="KW-1185">Reference proteome</keyword>
<accession>C5DII3</accession>
<protein>
    <recommendedName>
        <fullName>Altered inheritance of mitochondria protein 4</fullName>
    </recommendedName>
</protein>
<organism>
    <name type="scientific">Lachancea thermotolerans (strain ATCC 56472 / CBS 6340 / NRRL Y-8284)</name>
    <name type="common">Yeast</name>
    <name type="synonym">Kluyveromyces thermotolerans</name>
    <dbReference type="NCBI Taxonomy" id="559295"/>
    <lineage>
        <taxon>Eukaryota</taxon>
        <taxon>Fungi</taxon>
        <taxon>Dikarya</taxon>
        <taxon>Ascomycota</taxon>
        <taxon>Saccharomycotina</taxon>
        <taxon>Saccharomycetes</taxon>
        <taxon>Saccharomycetales</taxon>
        <taxon>Saccharomycetaceae</taxon>
        <taxon>Lachancea</taxon>
    </lineage>
</organism>
<feature type="chain" id="PRO_0000399855" description="Altered inheritance of mitochondria protein 4">
    <location>
        <begin position="1"/>
        <end position="88"/>
    </location>
</feature>
<feature type="region of interest" description="Disordered" evidence="2">
    <location>
        <begin position="1"/>
        <end position="23"/>
    </location>
</feature>
<sequence>MSKSNYMSYSDEKSSSKSFGFENNNVKNQELGERSIFYDHEWNPEGKAPSGYKNVPYNQYTFKRKSKVEPKLQGFKSIPFPSSEDKQP</sequence>
<dbReference type="EMBL" id="CU928169">
    <property type="protein sequence ID" value="CAR23594.1"/>
    <property type="molecule type" value="Genomic_DNA"/>
</dbReference>
<dbReference type="RefSeq" id="XP_002554031.1">
    <property type="nucleotide sequence ID" value="XM_002553985.1"/>
</dbReference>
<dbReference type="FunCoup" id="C5DII3">
    <property type="interactions" value="149"/>
</dbReference>
<dbReference type="GeneID" id="8292199"/>
<dbReference type="KEGG" id="lth:KLTH0E12738g"/>
<dbReference type="eggNOG" id="ENOG502SDQZ">
    <property type="taxonomic scope" value="Eukaryota"/>
</dbReference>
<dbReference type="HOGENOM" id="CLU_180207_0_0_1"/>
<dbReference type="InParanoid" id="C5DII3"/>
<dbReference type="OMA" id="HEWNPEG"/>
<dbReference type="OrthoDB" id="4041945at2759"/>
<dbReference type="Proteomes" id="UP000002036">
    <property type="component" value="Chromosome E"/>
</dbReference>
<dbReference type="GO" id="GO:0005737">
    <property type="term" value="C:cytoplasm"/>
    <property type="evidence" value="ECO:0007669"/>
    <property type="project" value="UniProtKB-SubCell"/>
</dbReference>
<dbReference type="Pfam" id="PF12622">
    <property type="entry name" value="NpwBP"/>
    <property type="match status" value="1"/>
</dbReference>
<name>AIM4_LACTC</name>
<evidence type="ECO:0000250" key="1"/>
<evidence type="ECO:0000256" key="2">
    <source>
        <dbReference type="SAM" id="MobiDB-lite"/>
    </source>
</evidence>
<evidence type="ECO:0000305" key="3"/>
<reference key="1">
    <citation type="journal article" date="2009" name="Genome Res.">
        <title>Comparative genomics of protoploid Saccharomycetaceae.</title>
        <authorList>
            <consortium name="The Genolevures Consortium"/>
            <person name="Souciet J.-L."/>
            <person name="Dujon B."/>
            <person name="Gaillardin C."/>
            <person name="Johnston M."/>
            <person name="Baret P.V."/>
            <person name="Cliften P."/>
            <person name="Sherman D.J."/>
            <person name="Weissenbach J."/>
            <person name="Westhof E."/>
            <person name="Wincker P."/>
            <person name="Jubin C."/>
            <person name="Poulain J."/>
            <person name="Barbe V."/>
            <person name="Segurens B."/>
            <person name="Artiguenave F."/>
            <person name="Anthouard V."/>
            <person name="Vacherie B."/>
            <person name="Val M.-E."/>
            <person name="Fulton R.S."/>
            <person name="Minx P."/>
            <person name="Wilson R."/>
            <person name="Durrens P."/>
            <person name="Jean G."/>
            <person name="Marck C."/>
            <person name="Martin T."/>
            <person name="Nikolski M."/>
            <person name="Rolland T."/>
            <person name="Seret M.-L."/>
            <person name="Casaregola S."/>
            <person name="Despons L."/>
            <person name="Fairhead C."/>
            <person name="Fischer G."/>
            <person name="Lafontaine I."/>
            <person name="Leh V."/>
            <person name="Lemaire M."/>
            <person name="de Montigny J."/>
            <person name="Neuveglise C."/>
            <person name="Thierry A."/>
            <person name="Blanc-Lenfle I."/>
            <person name="Bleykasten C."/>
            <person name="Diffels J."/>
            <person name="Fritsch E."/>
            <person name="Frangeul L."/>
            <person name="Goeffon A."/>
            <person name="Jauniaux N."/>
            <person name="Kachouri-Lafond R."/>
            <person name="Payen C."/>
            <person name="Potier S."/>
            <person name="Pribylova L."/>
            <person name="Ozanne C."/>
            <person name="Richard G.-F."/>
            <person name="Sacerdot C."/>
            <person name="Straub M.-L."/>
            <person name="Talla E."/>
        </authorList>
    </citation>
    <scope>NUCLEOTIDE SEQUENCE [LARGE SCALE GENOMIC DNA]</scope>
    <source>
        <strain>ATCC 56472 / CBS 6340 / NRRL Y-8284</strain>
    </source>
</reference>
<comment type="subcellular location">
    <subcellularLocation>
        <location evidence="1">Cytoplasm</location>
    </subcellularLocation>
</comment>
<comment type="similarity">
    <text evidence="3">Belongs to the AIM4 family.</text>
</comment>
<gene>
    <name type="primary">AIM4</name>
    <name type="ordered locus">KLTH0E12738g</name>
</gene>
<proteinExistence type="inferred from homology"/>